<proteinExistence type="inferred from homology"/>
<name>BIOH_ECOSM</name>
<comment type="function">
    <text evidence="2">The physiological role of BioH is to remove the methyl group introduced by BioC when the pimeloyl moiety is complete. It allows to synthesize pimeloyl-ACP via the fatty acid synthetic pathway through the hydrolysis of the ester bonds of pimeloyl-ACP esters.</text>
</comment>
<comment type="catalytic activity">
    <reaction evidence="2">
        <text>6-carboxyhexanoyl-[ACP] methyl ester + H2O = 6-carboxyhexanoyl-[ACP] + methanol + H(+)</text>
        <dbReference type="Rhea" id="RHEA:42700"/>
        <dbReference type="Rhea" id="RHEA-COMP:9955"/>
        <dbReference type="Rhea" id="RHEA-COMP:10186"/>
        <dbReference type="ChEBI" id="CHEBI:15377"/>
        <dbReference type="ChEBI" id="CHEBI:15378"/>
        <dbReference type="ChEBI" id="CHEBI:17790"/>
        <dbReference type="ChEBI" id="CHEBI:78846"/>
        <dbReference type="ChEBI" id="CHEBI:82735"/>
        <dbReference type="EC" id="3.1.1.85"/>
    </reaction>
</comment>
<comment type="pathway">
    <text evidence="2">Cofactor biosynthesis; biotin biosynthesis.</text>
</comment>
<comment type="subunit">
    <text evidence="2">Monomer.</text>
</comment>
<comment type="subcellular location">
    <subcellularLocation>
        <location evidence="2">Cytoplasm</location>
    </subcellularLocation>
</comment>
<comment type="similarity">
    <text evidence="2">Belongs to the AB hydrolase superfamily. Carboxylesterase BioH family.</text>
</comment>
<protein>
    <recommendedName>
        <fullName evidence="2">Pimeloyl-[acyl-carrier protein] methyl ester esterase</fullName>
        <ecNumber evidence="2">3.1.1.85</ecNumber>
    </recommendedName>
    <alternativeName>
        <fullName evidence="2">Biotin synthesis protein BioH</fullName>
    </alternativeName>
    <alternativeName>
        <fullName evidence="2">Carboxylesterase BioH</fullName>
    </alternativeName>
</protein>
<sequence length="256" mass="28588">MNNIWWQTKGQGNVHLVLLHGWGLNAEVWRCIDEELSSHFTLHLVDLPGFGRSRGFGAMSLADMAEAVLRQAPDKAIWLGWSLGGLVASQIALTHPERVQALVTVASSPCFSARDEWPGIKPDVLAGFQQQLSDDFQRTVERFLALQTMGTETARQDARALKKTVLALPMPEVDVLNGGLEILKTVDLRQPLQNVSMPFLRLYGYLDGLVPRKVVPMLDKLWPHSESYIFAKAAHAPFISHPAEFCRMLVALKQRV</sequence>
<keyword id="KW-0093">Biotin biosynthesis</keyword>
<keyword id="KW-0963">Cytoplasm</keyword>
<keyword id="KW-0378">Hydrolase</keyword>
<keyword id="KW-0719">Serine esterase</keyword>
<gene>
    <name evidence="2" type="primary">bioH</name>
    <name type="ordered locus">EcSMS35_3693</name>
</gene>
<organism>
    <name type="scientific">Escherichia coli (strain SMS-3-5 / SECEC)</name>
    <dbReference type="NCBI Taxonomy" id="439855"/>
    <lineage>
        <taxon>Bacteria</taxon>
        <taxon>Pseudomonadati</taxon>
        <taxon>Pseudomonadota</taxon>
        <taxon>Gammaproteobacteria</taxon>
        <taxon>Enterobacterales</taxon>
        <taxon>Enterobacteriaceae</taxon>
        <taxon>Escherichia</taxon>
    </lineage>
</organism>
<evidence type="ECO:0000255" key="1"/>
<evidence type="ECO:0000255" key="2">
    <source>
        <dbReference type="HAMAP-Rule" id="MF_01260"/>
    </source>
</evidence>
<feature type="chain" id="PRO_1000139993" description="Pimeloyl-[acyl-carrier protein] methyl ester esterase">
    <location>
        <begin position="1"/>
        <end position="256"/>
    </location>
</feature>
<feature type="domain" description="AB hydrolase-1" evidence="1">
    <location>
        <begin position="15"/>
        <end position="242"/>
    </location>
</feature>
<feature type="active site" description="Nucleophile" evidence="2">
    <location>
        <position position="82"/>
    </location>
</feature>
<feature type="active site" evidence="2">
    <location>
        <position position="207"/>
    </location>
</feature>
<feature type="active site" evidence="2">
    <location>
        <position position="235"/>
    </location>
</feature>
<feature type="binding site" evidence="2">
    <location>
        <position position="22"/>
    </location>
    <ligand>
        <name>substrate</name>
    </ligand>
</feature>
<feature type="binding site" evidence="2">
    <location>
        <begin position="82"/>
        <end position="83"/>
    </location>
    <ligand>
        <name>substrate</name>
    </ligand>
</feature>
<feature type="binding site" evidence="2">
    <location>
        <begin position="143"/>
        <end position="147"/>
    </location>
    <ligand>
        <name>substrate</name>
    </ligand>
</feature>
<feature type="binding site" evidence="2">
    <location>
        <position position="235"/>
    </location>
    <ligand>
        <name>substrate</name>
    </ligand>
</feature>
<accession>B1LHL2</accession>
<reference key="1">
    <citation type="journal article" date="2008" name="J. Bacteriol.">
        <title>Insights into the environmental resistance gene pool from the genome sequence of the multidrug-resistant environmental isolate Escherichia coli SMS-3-5.</title>
        <authorList>
            <person name="Fricke W.F."/>
            <person name="Wright M.S."/>
            <person name="Lindell A.H."/>
            <person name="Harkins D.M."/>
            <person name="Baker-Austin C."/>
            <person name="Ravel J."/>
            <person name="Stepanauskas R."/>
        </authorList>
    </citation>
    <scope>NUCLEOTIDE SEQUENCE [LARGE SCALE GENOMIC DNA]</scope>
    <source>
        <strain>SMS-3-5 / SECEC</strain>
    </source>
</reference>
<dbReference type="EC" id="3.1.1.85" evidence="2"/>
<dbReference type="EMBL" id="CP000970">
    <property type="protein sequence ID" value="ACB16409.1"/>
    <property type="molecule type" value="Genomic_DNA"/>
</dbReference>
<dbReference type="RefSeq" id="WP_001060097.1">
    <property type="nucleotide sequence ID" value="NC_010498.1"/>
</dbReference>
<dbReference type="SMR" id="B1LHL2"/>
<dbReference type="ESTHER" id="ecoli-bioh">
    <property type="family name" value="BioH"/>
</dbReference>
<dbReference type="MEROPS" id="S33.994"/>
<dbReference type="KEGG" id="ecm:EcSMS35_3693"/>
<dbReference type="HOGENOM" id="CLU_020336_12_2_6"/>
<dbReference type="UniPathway" id="UPA00078"/>
<dbReference type="Proteomes" id="UP000007011">
    <property type="component" value="Chromosome"/>
</dbReference>
<dbReference type="GO" id="GO:0005737">
    <property type="term" value="C:cytoplasm"/>
    <property type="evidence" value="ECO:0007669"/>
    <property type="project" value="UniProtKB-SubCell"/>
</dbReference>
<dbReference type="GO" id="GO:0090499">
    <property type="term" value="F:pimelyl-[acyl-carrier protein] methyl ester esterase activity"/>
    <property type="evidence" value="ECO:0007669"/>
    <property type="project" value="UniProtKB-EC"/>
</dbReference>
<dbReference type="GO" id="GO:0009102">
    <property type="term" value="P:biotin biosynthetic process"/>
    <property type="evidence" value="ECO:0007669"/>
    <property type="project" value="UniProtKB-UniRule"/>
</dbReference>
<dbReference type="FunFam" id="3.40.50.1820:FF:000045">
    <property type="entry name" value="Pimeloyl-[acyl-carrier protein] methyl ester esterase"/>
    <property type="match status" value="1"/>
</dbReference>
<dbReference type="Gene3D" id="3.40.50.1820">
    <property type="entry name" value="alpha/beta hydrolase"/>
    <property type="match status" value="1"/>
</dbReference>
<dbReference type="HAMAP" id="MF_01260">
    <property type="entry name" value="Carboxylester"/>
    <property type="match status" value="1"/>
</dbReference>
<dbReference type="InterPro" id="IPR000073">
    <property type="entry name" value="AB_hydrolase_1"/>
</dbReference>
<dbReference type="InterPro" id="IPR029058">
    <property type="entry name" value="AB_hydrolase_fold"/>
</dbReference>
<dbReference type="InterPro" id="IPR010076">
    <property type="entry name" value="BioH"/>
</dbReference>
<dbReference type="InterPro" id="IPR050228">
    <property type="entry name" value="Carboxylesterase_BioH"/>
</dbReference>
<dbReference type="NCBIfam" id="TIGR01738">
    <property type="entry name" value="bioH"/>
    <property type="match status" value="1"/>
</dbReference>
<dbReference type="NCBIfam" id="NF007674">
    <property type="entry name" value="PRK10349.1"/>
    <property type="match status" value="1"/>
</dbReference>
<dbReference type="PANTHER" id="PTHR43194">
    <property type="entry name" value="HYDROLASE ALPHA/BETA FOLD FAMILY"/>
    <property type="match status" value="1"/>
</dbReference>
<dbReference type="PANTHER" id="PTHR43194:SF5">
    <property type="entry name" value="PIMELOYL-[ACYL-CARRIER PROTEIN] METHYL ESTER ESTERASE"/>
    <property type="match status" value="1"/>
</dbReference>
<dbReference type="Pfam" id="PF00561">
    <property type="entry name" value="Abhydrolase_1"/>
    <property type="match status" value="1"/>
</dbReference>
<dbReference type="SUPFAM" id="SSF53474">
    <property type="entry name" value="alpha/beta-Hydrolases"/>
    <property type="match status" value="1"/>
</dbReference>